<proteinExistence type="evidence at protein level"/>
<name>GLST_MYCTU</name>
<protein>
    <recommendedName>
        <fullName>Glycolipid sulfotransferase Rv1373</fullName>
        <ecNumber>2.8.2.-</ecNumber>
    </recommendedName>
</protein>
<evidence type="ECO:0000250" key="1"/>
<evidence type="ECO:0000255" key="2"/>
<evidence type="ECO:0000269" key="3">
    <source>
    </source>
</evidence>
<evidence type="ECO:0000305" key="4"/>
<reference key="1">
    <citation type="journal article" date="2002" name="Microbiology">
        <title>Molecular cloning and expression of a novel glycolipid sulfotransferase in Mycobacterium tuberculosis.</title>
        <authorList>
            <person name="Rivera-Marrero C.A."/>
            <person name="Ritzenthaler J.D."/>
            <person name="Newburn S.A."/>
            <person name="Roman J."/>
            <person name="Cummings R.D."/>
        </authorList>
    </citation>
    <scope>NUCLEOTIDE SEQUENCE [GENOMIC DNA]</scope>
    <scope>FUNCTION AS A SULFOTRANSFERASE</scope>
    <source>
        <strain>ATCC 25618 / H37Rv</strain>
    </source>
</reference>
<reference key="2">
    <citation type="journal article" date="1998" name="Nature">
        <title>Deciphering the biology of Mycobacterium tuberculosis from the complete genome sequence.</title>
        <authorList>
            <person name="Cole S.T."/>
            <person name="Brosch R."/>
            <person name="Parkhill J."/>
            <person name="Garnier T."/>
            <person name="Churcher C.M."/>
            <person name="Harris D.E."/>
            <person name="Gordon S.V."/>
            <person name="Eiglmeier K."/>
            <person name="Gas S."/>
            <person name="Barry C.E. III"/>
            <person name="Tekaia F."/>
            <person name="Badcock K."/>
            <person name="Basham D."/>
            <person name="Brown D."/>
            <person name="Chillingworth T."/>
            <person name="Connor R."/>
            <person name="Davies R.M."/>
            <person name="Devlin K."/>
            <person name="Feltwell T."/>
            <person name="Gentles S."/>
            <person name="Hamlin N."/>
            <person name="Holroyd S."/>
            <person name="Hornsby T."/>
            <person name="Jagels K."/>
            <person name="Krogh A."/>
            <person name="McLean J."/>
            <person name="Moule S."/>
            <person name="Murphy L.D."/>
            <person name="Oliver S."/>
            <person name="Osborne J."/>
            <person name="Quail M.A."/>
            <person name="Rajandream M.A."/>
            <person name="Rogers J."/>
            <person name="Rutter S."/>
            <person name="Seeger K."/>
            <person name="Skelton S."/>
            <person name="Squares S."/>
            <person name="Squares R."/>
            <person name="Sulston J.E."/>
            <person name="Taylor K."/>
            <person name="Whitehead S."/>
            <person name="Barrell B.G."/>
        </authorList>
    </citation>
    <scope>NUCLEOTIDE SEQUENCE [LARGE SCALE GENOMIC DNA]</scope>
    <source>
        <strain>ATCC 25618 / H37Rv</strain>
    </source>
</reference>
<reference key="3">
    <citation type="journal article" date="2011" name="Mol. Cell. Proteomics">
        <title>Proteogenomic analysis of Mycobacterium tuberculosis by high resolution mass spectrometry.</title>
        <authorList>
            <person name="Kelkar D.S."/>
            <person name="Kumar D."/>
            <person name="Kumar P."/>
            <person name="Balakrishnan L."/>
            <person name="Muthusamy B."/>
            <person name="Yadav A.K."/>
            <person name="Shrivastava P."/>
            <person name="Marimuthu A."/>
            <person name="Anand S."/>
            <person name="Sundaram H."/>
            <person name="Kingsbury R."/>
            <person name="Harsha H.C."/>
            <person name="Nair B."/>
            <person name="Prasad T.S."/>
            <person name="Chauhan D.S."/>
            <person name="Katoch K."/>
            <person name="Katoch V.M."/>
            <person name="Kumar P."/>
            <person name="Chaerkady R."/>
            <person name="Ramachandran S."/>
            <person name="Dash D."/>
            <person name="Pandey A."/>
        </authorList>
    </citation>
    <scope>IDENTIFICATION BY MASS SPECTROMETRY [LARGE SCALE ANALYSIS]</scope>
    <source>
        <strain>ATCC 25618 / H37Rv</strain>
    </source>
</reference>
<accession>P9WGB9</accession>
<accession>L0T6N8</accession>
<accession>P71801</accession>
<accession>Q8VK27</accession>
<keyword id="KW-1185">Reference proteome</keyword>
<keyword id="KW-0808">Transferase</keyword>
<gene>
    <name type="ordered locus">Rv1373</name>
</gene>
<dbReference type="EC" id="2.8.2.-"/>
<dbReference type="EMBL" id="AL123456">
    <property type="protein sequence ID" value="CCP44132.1"/>
    <property type="molecule type" value="Genomic_DNA"/>
</dbReference>
<dbReference type="PIR" id="B70958">
    <property type="entry name" value="B70958"/>
</dbReference>
<dbReference type="RefSeq" id="NP_215889.1">
    <property type="nucleotide sequence ID" value="NC_000962.3"/>
</dbReference>
<dbReference type="RefSeq" id="WP_003898849.1">
    <property type="nucleotide sequence ID" value="NZ_NVQJ01000050.1"/>
</dbReference>
<dbReference type="SMR" id="P9WGB9"/>
<dbReference type="FunCoup" id="P9WGB9">
    <property type="interactions" value="1"/>
</dbReference>
<dbReference type="STRING" id="83332.Rv1373"/>
<dbReference type="PaxDb" id="83332-Rv1373"/>
<dbReference type="DNASU" id="886781"/>
<dbReference type="GeneID" id="886781"/>
<dbReference type="KEGG" id="mtu:Rv1373"/>
<dbReference type="KEGG" id="mtv:RVBD_1373"/>
<dbReference type="PATRIC" id="fig|83332.111.peg.1533"/>
<dbReference type="TubercuList" id="Rv1373"/>
<dbReference type="eggNOG" id="ENOG502ZA0J">
    <property type="taxonomic scope" value="Bacteria"/>
</dbReference>
<dbReference type="InParanoid" id="P9WGB9"/>
<dbReference type="OrthoDB" id="3399180at2"/>
<dbReference type="Proteomes" id="UP000001584">
    <property type="component" value="Chromosome"/>
</dbReference>
<dbReference type="GO" id="GO:0005737">
    <property type="term" value="C:cytoplasm"/>
    <property type="evidence" value="ECO:0000318"/>
    <property type="project" value="GO_Central"/>
</dbReference>
<dbReference type="GO" id="GO:0008146">
    <property type="term" value="F:sulfotransferase activity"/>
    <property type="evidence" value="ECO:0000314"/>
    <property type="project" value="MTBBASE"/>
</dbReference>
<dbReference type="GO" id="GO:0051923">
    <property type="term" value="P:sulfation"/>
    <property type="evidence" value="ECO:0000318"/>
    <property type="project" value="GO_Central"/>
</dbReference>
<dbReference type="GO" id="GO:0046506">
    <property type="term" value="P:sulfolipid biosynthetic process"/>
    <property type="evidence" value="ECO:0000314"/>
    <property type="project" value="MTBBASE"/>
</dbReference>
<dbReference type="FunFam" id="3.40.50.300:FF:003311">
    <property type="entry name" value="Glycolipid sulfotransferase BCG_1434"/>
    <property type="match status" value="1"/>
</dbReference>
<dbReference type="Gene3D" id="3.40.50.300">
    <property type="entry name" value="P-loop containing nucleotide triphosphate hydrolases"/>
    <property type="match status" value="1"/>
</dbReference>
<dbReference type="InterPro" id="IPR027417">
    <property type="entry name" value="P-loop_NTPase"/>
</dbReference>
<dbReference type="InterPro" id="IPR000863">
    <property type="entry name" value="Sulfotransferase_dom"/>
</dbReference>
<dbReference type="PANTHER" id="PTHR11783">
    <property type="entry name" value="SULFOTRANSFERASE SULT"/>
    <property type="match status" value="1"/>
</dbReference>
<dbReference type="Pfam" id="PF00685">
    <property type="entry name" value="Sulfotransfer_1"/>
    <property type="match status" value="1"/>
</dbReference>
<dbReference type="SUPFAM" id="SSF52540">
    <property type="entry name" value="P-loop containing nucleoside triphosphate hydrolases"/>
    <property type="match status" value="1"/>
</dbReference>
<organism>
    <name type="scientific">Mycobacterium tuberculosis (strain ATCC 25618 / H37Rv)</name>
    <dbReference type="NCBI Taxonomy" id="83332"/>
    <lineage>
        <taxon>Bacteria</taxon>
        <taxon>Bacillati</taxon>
        <taxon>Actinomycetota</taxon>
        <taxon>Actinomycetes</taxon>
        <taxon>Mycobacteriales</taxon>
        <taxon>Mycobacteriaceae</taxon>
        <taxon>Mycobacterium</taxon>
        <taxon>Mycobacterium tuberculosis complex</taxon>
    </lineage>
</organism>
<sequence>MNSEHPMTDRVVYRSLMADNLRWDALQLRDGDIIISAPSKSGLTWTQRLVSLLVFDGPDLPGPLSTVSPWLDQTIRPIEEVVATLDAQQHRRFIKTHTPLDGLVLDDRVSYICVGRDPRDAAVSMLYQSANMNEDRMRILHEAVVPFHERIAPPFAELGHARSPTEEFRDWMEGPNQPPPGIGFTHLKGIGTLANILHQLGTVWVRRHLPNVALFHYADYQADLAGELLRPARVLGIAATRDRARDLAQYATLDAMRSRASEIAPNTTDGIWHSDERFFRRGGSGDWQQFFTEAEHLRYYHRINQLAPPDLLAWAHEGRRGYDPAN</sequence>
<feature type="chain" id="PRO_0000315390" description="Glycolipid sulfotransferase Rv1373">
    <location>
        <begin position="1"/>
        <end position="326"/>
    </location>
</feature>
<feature type="active site" description="Proton acceptor" evidence="2">
    <location>
        <position position="97"/>
    </location>
</feature>
<feature type="binding site" evidence="1">
    <location>
        <begin position="40"/>
        <end position="45"/>
    </location>
    <ligand>
        <name>3'-phosphoadenylyl sulfate</name>
        <dbReference type="ChEBI" id="CHEBI:58339"/>
    </ligand>
</feature>
<feature type="binding site" evidence="1">
    <location>
        <begin position="116"/>
        <end position="124"/>
    </location>
    <ligand>
        <name>3'-phosphoadenylyl sulfate</name>
        <dbReference type="ChEBI" id="CHEBI:58339"/>
    </ligand>
</feature>
<comment type="function">
    <text evidence="3">Involved in the synthesis of cell wall sulfolipids with activity towards mycobacterial trehalose glycolipids and eukaryotic glycolipids such as glucosylceramide and galactosylceramide (type I and II) but not towards eukaryotic 3'-sulfate galactosylceramide.</text>
</comment>
<comment type="similarity">
    <text evidence="4">Belongs to the sulfotransferase 1 family.</text>
</comment>